<sequence>MSTQELNIRPDFDREIVDIVDYVMNYEITSKVAYDTAHYCLLDTLGCGLEALEYPACKKLLGPIVPGTVVPNGARVPGTQFQLDPVQAAFNIGAMIRWLDFNDTWLAAEWGHPSDNLGGILATADWLSRNAVAAGKAPLTMKQVLSGMIKAHEIQGCIALENAFNRVGLDHVLLVKVASTAVVAEMLGLTRDEILNAVSLAWVDGQSLRTYRHAPNTGTRKSWAAGDATSRAVRLALMAKTGEMGYPSALTAKTWGFYDVSFKGETFRFQRPYGSYVMENVLFKISFPAEFHSQTAVEAAMTLYEQMQAAGKTAADIEKVTIRTHEACLRIIDKKGPLNNPADRDHCIQYMVAVPLLFGRLTAADYEDEVAQDKRIDALREKIVCYEDPAFTADYHDPEKRAIGNAITVEFTDGSRFGEVVVEYPIGHARRRADGIPKLIEKFKINLARQFPTRQQQRILDVSLDRARLEQMPVNEYLDLYVI</sequence>
<protein>
    <recommendedName>
        <fullName evidence="4">2-methylcitrate dehydratase</fullName>
        <shortName evidence="4">2-MC dehydratase</shortName>
        <ecNumber evidence="3">4.2.1.79</ecNumber>
    </recommendedName>
    <alternativeName>
        <fullName evidence="4">Aconitate hydratase</fullName>
        <shortName evidence="4">ACN</shortName>
        <shortName evidence="4">Aconitase</shortName>
        <ecNumber evidence="3">4.2.1.3</ecNumber>
    </alternativeName>
</protein>
<keyword id="KW-0456">Lyase</keyword>
<keyword id="KW-1185">Reference proteome</keyword>
<keyword id="KW-0816">Tricarboxylic acid cycle</keyword>
<organism>
    <name type="scientific">Salmonella typhimurium (strain LT2 / SGSC1412 / ATCC 700720)</name>
    <dbReference type="NCBI Taxonomy" id="99287"/>
    <lineage>
        <taxon>Bacteria</taxon>
        <taxon>Pseudomonadati</taxon>
        <taxon>Pseudomonadota</taxon>
        <taxon>Gammaproteobacteria</taxon>
        <taxon>Enterobacterales</taxon>
        <taxon>Enterobacteriaceae</taxon>
        <taxon>Salmonella</taxon>
    </lineage>
</organism>
<name>PRPD_SALTY</name>
<dbReference type="EC" id="4.2.1.79" evidence="3"/>
<dbReference type="EC" id="4.2.1.3" evidence="3"/>
<dbReference type="EMBL" id="U51879">
    <property type="protein sequence ID" value="AAC44816.1"/>
    <property type="molecule type" value="Genomic_DNA"/>
</dbReference>
<dbReference type="EMBL" id="AE006468">
    <property type="protein sequence ID" value="AAL19324.1"/>
    <property type="molecule type" value="Genomic_DNA"/>
</dbReference>
<dbReference type="RefSeq" id="NP_459365.1">
    <property type="nucleotide sequence ID" value="NC_003197.2"/>
</dbReference>
<dbReference type="RefSeq" id="WP_000107071.1">
    <property type="nucleotide sequence ID" value="NC_003197.2"/>
</dbReference>
<dbReference type="SMR" id="P74840"/>
<dbReference type="STRING" id="99287.STM0370"/>
<dbReference type="PaxDb" id="99287-STM0370"/>
<dbReference type="GeneID" id="1251889"/>
<dbReference type="KEGG" id="stm:STM0370"/>
<dbReference type="PATRIC" id="fig|99287.12.peg.392"/>
<dbReference type="HOGENOM" id="CLU_021803_1_0_6"/>
<dbReference type="OMA" id="DHSVMYI"/>
<dbReference type="PhylomeDB" id="P74840"/>
<dbReference type="BioCyc" id="MetaCyc:MONOMER-64"/>
<dbReference type="BioCyc" id="SENT99287:STM0370-MONOMER"/>
<dbReference type="BRENDA" id="4.2.1.79">
    <property type="organism ID" value="2169"/>
</dbReference>
<dbReference type="UniPathway" id="UPA00223">
    <property type="reaction ID" value="UER00718"/>
</dbReference>
<dbReference type="UniPathway" id="UPA00946"/>
<dbReference type="Proteomes" id="UP000001014">
    <property type="component" value="Chromosome"/>
</dbReference>
<dbReference type="GO" id="GO:0051537">
    <property type="term" value="F:2 iron, 2 sulfur cluster binding"/>
    <property type="evidence" value="ECO:0007669"/>
    <property type="project" value="InterPro"/>
</dbReference>
<dbReference type="GO" id="GO:0047547">
    <property type="term" value="F:2-methylcitrate dehydratase activity"/>
    <property type="evidence" value="ECO:0000314"/>
    <property type="project" value="UniProtKB"/>
</dbReference>
<dbReference type="GO" id="GO:0003994">
    <property type="term" value="F:aconitate hydratase activity"/>
    <property type="evidence" value="ECO:0007669"/>
    <property type="project" value="UniProtKB-EC"/>
</dbReference>
<dbReference type="GO" id="GO:0019629">
    <property type="term" value="P:propionate catabolic process, 2-methylcitrate cycle"/>
    <property type="evidence" value="ECO:0000314"/>
    <property type="project" value="UniProtKB"/>
</dbReference>
<dbReference type="GO" id="GO:0019679">
    <property type="term" value="P:propionate metabolic process, methylcitrate cycle"/>
    <property type="evidence" value="ECO:0007669"/>
    <property type="project" value="InterPro"/>
</dbReference>
<dbReference type="GO" id="GO:0006099">
    <property type="term" value="P:tricarboxylic acid cycle"/>
    <property type="evidence" value="ECO:0007669"/>
    <property type="project" value="UniProtKB-UniPathway"/>
</dbReference>
<dbReference type="FunFam" id="1.10.4100.10:FF:000001">
    <property type="entry name" value="2-methylcitrate dehydratase"/>
    <property type="match status" value="1"/>
</dbReference>
<dbReference type="FunFam" id="3.30.1330.120:FF:000001">
    <property type="entry name" value="2-methylcitrate dehydratase"/>
    <property type="match status" value="1"/>
</dbReference>
<dbReference type="Gene3D" id="1.10.4100.10">
    <property type="entry name" value="2-methylcitrate dehydratase PrpD"/>
    <property type="match status" value="1"/>
</dbReference>
<dbReference type="Gene3D" id="3.30.1330.120">
    <property type="entry name" value="2-methylcitrate dehydratase PrpD"/>
    <property type="match status" value="1"/>
</dbReference>
<dbReference type="InterPro" id="IPR012705">
    <property type="entry name" value="2Me_IsoCit_deHydtase_PrpD"/>
</dbReference>
<dbReference type="InterPro" id="IPR036148">
    <property type="entry name" value="MmgE/PrpD_sf"/>
</dbReference>
<dbReference type="InterPro" id="IPR042183">
    <property type="entry name" value="MmgE/PrpD_sf_1"/>
</dbReference>
<dbReference type="InterPro" id="IPR042188">
    <property type="entry name" value="MmgE/PrpD_sf_2"/>
</dbReference>
<dbReference type="InterPro" id="IPR005656">
    <property type="entry name" value="MmgE_PrpD"/>
</dbReference>
<dbReference type="InterPro" id="IPR045337">
    <property type="entry name" value="MmgE_PrpD_C"/>
</dbReference>
<dbReference type="InterPro" id="IPR045336">
    <property type="entry name" value="MmgE_PrpD_N"/>
</dbReference>
<dbReference type="NCBIfam" id="NF006943">
    <property type="entry name" value="PRK09425.1"/>
    <property type="match status" value="1"/>
</dbReference>
<dbReference type="NCBIfam" id="TIGR02330">
    <property type="entry name" value="prpD"/>
    <property type="match status" value="1"/>
</dbReference>
<dbReference type="PANTHER" id="PTHR16943:SF8">
    <property type="entry name" value="2-METHYLCITRATE DEHYDRATASE"/>
    <property type="match status" value="1"/>
</dbReference>
<dbReference type="PANTHER" id="PTHR16943">
    <property type="entry name" value="2-METHYLCITRATE DEHYDRATASE-RELATED"/>
    <property type="match status" value="1"/>
</dbReference>
<dbReference type="Pfam" id="PF19305">
    <property type="entry name" value="MmgE_PrpD_C"/>
    <property type="match status" value="1"/>
</dbReference>
<dbReference type="Pfam" id="PF03972">
    <property type="entry name" value="MmgE_PrpD_N"/>
    <property type="match status" value="1"/>
</dbReference>
<dbReference type="SUPFAM" id="SSF103378">
    <property type="entry name" value="2-methylcitrate dehydratase PrpD"/>
    <property type="match status" value="1"/>
</dbReference>
<gene>
    <name type="primary">prpD</name>
    <name type="ordered locus">STM0370</name>
</gene>
<evidence type="ECO:0000250" key="1">
    <source>
        <dbReference type="UniProtKB" id="P77243"/>
    </source>
</evidence>
<evidence type="ECO:0000269" key="2">
    <source>
    </source>
</evidence>
<evidence type="ECO:0000269" key="3">
    <source>
    </source>
</evidence>
<evidence type="ECO:0000303" key="4">
    <source>
    </source>
</evidence>
<evidence type="ECO:0000305" key="5"/>
<evidence type="ECO:0000305" key="6">
    <source>
    </source>
</evidence>
<evidence type="ECO:0000305" key="7">
    <source>
    </source>
</evidence>
<proteinExistence type="evidence at protein level"/>
<feature type="chain" id="PRO_0000215026" description="2-methylcitrate dehydratase">
    <location>
        <begin position="1"/>
        <end position="483"/>
    </location>
</feature>
<feature type="sequence conflict" description="In Ref. 1; AAC44816." evidence="5" ref="1">
    <original>Q</original>
    <variation>H</variation>
    <location>
        <position position="308"/>
    </location>
</feature>
<accession>P74840</accession>
<comment type="function">
    <text evidence="2 3">Involved in the catabolism of short chain fatty acids (SCFA) via the 2-methylcitrate cycle I (propionate degradation route). Catalyzes the dehydration of 2-methylcitrate (2-MC) to yield the cis isomer of 2-methyl-aconitate. It is also able to catalyze the dehydration of citrate at a lower rate, and the hydration of cis-aconitate. It has no aconitase-like activity and is unable to catalyze the hydration of 2-methyl-cis-aconitate.</text>
</comment>
<comment type="catalytic activity">
    <reaction evidence="3">
        <text>(2S,3S)-2-methylcitrate = 2-methyl-cis-aconitate + H2O</text>
        <dbReference type="Rhea" id="RHEA:17725"/>
        <dbReference type="ChEBI" id="CHEBI:15377"/>
        <dbReference type="ChEBI" id="CHEBI:57872"/>
        <dbReference type="ChEBI" id="CHEBI:58853"/>
        <dbReference type="EC" id="4.2.1.79"/>
    </reaction>
</comment>
<comment type="catalytic activity">
    <reaction evidence="3">
        <text>citrate = D-threo-isocitrate</text>
        <dbReference type="Rhea" id="RHEA:10336"/>
        <dbReference type="ChEBI" id="CHEBI:15562"/>
        <dbReference type="ChEBI" id="CHEBI:16947"/>
        <dbReference type="EC" id="4.2.1.3"/>
    </reaction>
</comment>
<comment type="pathway">
    <text evidence="7">Organic acid metabolism; propanoate degradation.</text>
</comment>
<comment type="pathway">
    <text evidence="6">Carbohydrate metabolism; tricarboxylic acid cycle; isocitrate from oxaloacetate: step 2/2.</text>
</comment>
<comment type="subunit">
    <text evidence="1">Monomer.</text>
</comment>
<comment type="disruption phenotype">
    <text evidence="2">Cells lacking this gene accumulate 2-methylcitrate during growth on propionate.</text>
</comment>
<comment type="similarity">
    <text evidence="5">Belongs to the PrpD family.</text>
</comment>
<reference key="1">
    <citation type="journal article" date="1997" name="J. Bacteriol.">
        <title>Propionate catabolism in Salmonella typhimurium LT2: two divergently transcribed units comprise the prp locus at 8.5 centisomes, prpR encodes a member of the sigma-54 family of activators, and the prpBCDE genes constitute an operon.</title>
        <authorList>
            <person name="Horswill A.R."/>
            <person name="Escalante-Semerena J.C."/>
        </authorList>
    </citation>
    <scope>NUCLEOTIDE SEQUENCE [GENOMIC DNA]</scope>
    <source>
        <strain>LT2</strain>
    </source>
</reference>
<reference key="2">
    <citation type="journal article" date="2001" name="Nature">
        <title>Complete genome sequence of Salmonella enterica serovar Typhimurium LT2.</title>
        <authorList>
            <person name="McClelland M."/>
            <person name="Sanderson K.E."/>
            <person name="Spieth J."/>
            <person name="Clifton S.W."/>
            <person name="Latreille P."/>
            <person name="Courtney L."/>
            <person name="Porwollik S."/>
            <person name="Ali J."/>
            <person name="Dante M."/>
            <person name="Du F."/>
            <person name="Hou S."/>
            <person name="Layman D."/>
            <person name="Leonard S."/>
            <person name="Nguyen C."/>
            <person name="Scott K."/>
            <person name="Holmes A."/>
            <person name="Grewal N."/>
            <person name="Mulvaney E."/>
            <person name="Ryan E."/>
            <person name="Sun H."/>
            <person name="Florea L."/>
            <person name="Miller W."/>
            <person name="Stoneking T."/>
            <person name="Nhan M."/>
            <person name="Waterston R."/>
            <person name="Wilson R.K."/>
        </authorList>
    </citation>
    <scope>NUCLEOTIDE SEQUENCE [LARGE SCALE GENOMIC DNA]</scope>
    <source>
        <strain>LT2 / SGSC1412 / ATCC 700720</strain>
    </source>
</reference>
<reference key="3">
    <citation type="journal article" date="1999" name="J. Bacteriol.">
        <title>Salmonella typhimurium LT2 catabolizes propionate via the 2-methylcitric acid cycle.</title>
        <authorList>
            <person name="Horswill A.R."/>
            <person name="Escalante-Semerena J.C."/>
        </authorList>
    </citation>
    <scope>FUNCTION</scope>
    <scope>DISRUPTION PHENOTYPE</scope>
    <source>
        <strain>LT2</strain>
    </source>
</reference>
<reference key="4">
    <citation type="journal article" date="2001" name="Biochemistry">
        <title>In vitro conversion of propionate to pyruvate by Salmonella enterica enzymes: 2-methylcitrate dehydratase (PrpD) and aconitase enzymes catalyze the conversion of 2-methylcitrate to 2-methylisocitrate.</title>
        <authorList>
            <person name="Horswill A.R."/>
            <person name="Escalante-Semerena J.C."/>
        </authorList>
    </citation>
    <scope>FUNCTION</scope>
    <scope>CATALYTIC ACTIVITY</scope>
    <scope>SUBSTRATE SPECIFICITY</scope>
    <source>
        <strain>LT2</strain>
    </source>
</reference>